<keyword id="KW-0012">Acyltransferase</keyword>
<keyword id="KW-0450">Lipoyl</keyword>
<keyword id="KW-1185">Reference proteome</keyword>
<keyword id="KW-0808">Transferase</keyword>
<keyword id="KW-0816">Tricarboxylic acid cycle</keyword>
<protein>
    <recommendedName>
        <fullName>Dihydrolipoyllysine-residue succinyltransferase component of 2-oxoglutarate dehydrogenase complex</fullName>
        <ecNumber evidence="2">2.3.1.61</ecNumber>
    </recommendedName>
    <alternativeName>
        <fullName>2-oxoglutarate dehydrogenase complex component E2</fullName>
        <shortName>OGDC-E2</shortName>
    </alternativeName>
    <alternativeName>
        <fullName>Dihydrolipoamide succinyltransferase component of 2-oxoglutarate dehydrogenase complex</fullName>
    </alternativeName>
</protein>
<gene>
    <name type="primary">sucB</name>
    <name type="ordered locus">HI_1661</name>
</gene>
<evidence type="ECO:0000250" key="1"/>
<evidence type="ECO:0000250" key="2">
    <source>
        <dbReference type="UniProtKB" id="P0AFG6"/>
    </source>
</evidence>
<evidence type="ECO:0000255" key="3">
    <source>
        <dbReference type="PROSITE-ProRule" id="PRU01066"/>
    </source>
</evidence>
<evidence type="ECO:0000255" key="4">
    <source>
        <dbReference type="PROSITE-ProRule" id="PRU01170"/>
    </source>
</evidence>
<evidence type="ECO:0000256" key="5">
    <source>
        <dbReference type="SAM" id="MobiDB-lite"/>
    </source>
</evidence>
<evidence type="ECO:0000305" key="6"/>
<accession>P45302</accession>
<proteinExistence type="inferred from homology"/>
<name>ODO2_HAEIN</name>
<comment type="function">
    <text evidence="2">E2 component of the 2-oxoglutarate dehydrogenase (OGDH) complex which catalyzes the second step in the conversion of 2-oxoglutarate to succinyl-CoA and CO(2).</text>
</comment>
<comment type="catalytic activity">
    <reaction evidence="2">
        <text>N(6)-[(R)-dihydrolipoyl]-L-lysyl-[protein] + succinyl-CoA = N(6)-[(R)-S(8)-succinyldihydrolipoyl]-L-lysyl-[protein] + CoA</text>
        <dbReference type="Rhea" id="RHEA:15213"/>
        <dbReference type="Rhea" id="RHEA-COMP:10475"/>
        <dbReference type="Rhea" id="RHEA-COMP:20092"/>
        <dbReference type="ChEBI" id="CHEBI:57287"/>
        <dbReference type="ChEBI" id="CHEBI:57292"/>
        <dbReference type="ChEBI" id="CHEBI:83100"/>
        <dbReference type="ChEBI" id="CHEBI:83120"/>
        <dbReference type="EC" id="2.3.1.61"/>
    </reaction>
</comment>
<comment type="cofactor">
    <cofactor evidence="1">
        <name>(R)-lipoate</name>
        <dbReference type="ChEBI" id="CHEBI:83088"/>
    </cofactor>
    <text evidence="1">Binds 1 lipoyl cofactor covalently.</text>
</comment>
<comment type="pathway">
    <text>Amino-acid degradation; L-lysine degradation via saccharopine pathway; glutaryl-CoA from L-lysine: step 6/6.</text>
</comment>
<comment type="subunit">
    <text evidence="2">Forms a 24-polypeptide structural core with octahedral symmetry. Part of the 2-oxoglutarate dehydrogenase (OGDH) complex composed of E1 (2-oxoglutarate dehydrogenase), E2 (dihydrolipoamide succinyltransferase) and E3 (dihydrolipoamide dehydrogenase); the complex contains multiple copies of the three enzymatic components (E1, E2 and E3).</text>
</comment>
<comment type="similarity">
    <text evidence="6">Belongs to the 2-oxoacid dehydrogenase family.</text>
</comment>
<dbReference type="EC" id="2.3.1.61" evidence="2"/>
<dbReference type="EMBL" id="L42023">
    <property type="protein sequence ID" value="AAC23307.1"/>
    <property type="molecule type" value="Genomic_DNA"/>
</dbReference>
<dbReference type="PIR" id="D64135">
    <property type="entry name" value="D64135"/>
</dbReference>
<dbReference type="RefSeq" id="NP_439803.1">
    <property type="nucleotide sequence ID" value="NC_000907.1"/>
</dbReference>
<dbReference type="SMR" id="P45302"/>
<dbReference type="STRING" id="71421.HI_1661"/>
<dbReference type="EnsemblBacteria" id="AAC23307">
    <property type="protein sequence ID" value="AAC23307"/>
    <property type="gene ID" value="HI_1661"/>
</dbReference>
<dbReference type="KEGG" id="hin:HI_1661"/>
<dbReference type="PATRIC" id="fig|71421.8.peg.1739"/>
<dbReference type="eggNOG" id="COG0508">
    <property type="taxonomic scope" value="Bacteria"/>
</dbReference>
<dbReference type="HOGENOM" id="CLU_016733_0_0_6"/>
<dbReference type="OrthoDB" id="9805770at2"/>
<dbReference type="PhylomeDB" id="P45302"/>
<dbReference type="BioCyc" id="HINF71421:G1GJ1-1678-MONOMER"/>
<dbReference type="UniPathway" id="UPA00868">
    <property type="reaction ID" value="UER00840"/>
</dbReference>
<dbReference type="Proteomes" id="UP000000579">
    <property type="component" value="Chromosome"/>
</dbReference>
<dbReference type="GO" id="GO:0005829">
    <property type="term" value="C:cytosol"/>
    <property type="evidence" value="ECO:0000318"/>
    <property type="project" value="GO_Central"/>
</dbReference>
<dbReference type="GO" id="GO:0045252">
    <property type="term" value="C:oxoglutarate dehydrogenase complex"/>
    <property type="evidence" value="ECO:0007669"/>
    <property type="project" value="InterPro"/>
</dbReference>
<dbReference type="GO" id="GO:0004149">
    <property type="term" value="F:dihydrolipoyllysine-residue succinyltransferase activity"/>
    <property type="evidence" value="ECO:0000318"/>
    <property type="project" value="GO_Central"/>
</dbReference>
<dbReference type="GO" id="GO:0033512">
    <property type="term" value="P:L-lysine catabolic process to acetyl-CoA via saccharopine"/>
    <property type="evidence" value="ECO:0007669"/>
    <property type="project" value="UniProtKB-UniPathway"/>
</dbReference>
<dbReference type="GO" id="GO:0006099">
    <property type="term" value="P:tricarboxylic acid cycle"/>
    <property type="evidence" value="ECO:0000318"/>
    <property type="project" value="GO_Central"/>
</dbReference>
<dbReference type="CDD" id="cd06849">
    <property type="entry name" value="lipoyl_domain"/>
    <property type="match status" value="1"/>
</dbReference>
<dbReference type="FunFam" id="3.30.559.10:FF:000005">
    <property type="entry name" value="Dihydrolipoyllysine-residue succinyltransferase component of 2-oxoglutarate dehydrogenase complex"/>
    <property type="match status" value="1"/>
</dbReference>
<dbReference type="Gene3D" id="2.40.50.100">
    <property type="match status" value="1"/>
</dbReference>
<dbReference type="Gene3D" id="3.30.559.10">
    <property type="entry name" value="Chloramphenicol acetyltransferase-like domain"/>
    <property type="match status" value="1"/>
</dbReference>
<dbReference type="Gene3D" id="4.10.320.10">
    <property type="entry name" value="E3-binding domain"/>
    <property type="match status" value="1"/>
</dbReference>
<dbReference type="InterPro" id="IPR003016">
    <property type="entry name" value="2-oxoA_DH_lipoyl-BS"/>
</dbReference>
<dbReference type="InterPro" id="IPR050537">
    <property type="entry name" value="2-oxoacid_dehydrogenase"/>
</dbReference>
<dbReference type="InterPro" id="IPR001078">
    <property type="entry name" value="2-oxoacid_DH_actylTfrase"/>
</dbReference>
<dbReference type="InterPro" id="IPR000089">
    <property type="entry name" value="Biotin_lipoyl"/>
</dbReference>
<dbReference type="InterPro" id="IPR023213">
    <property type="entry name" value="CAT-like_dom_sf"/>
</dbReference>
<dbReference type="InterPro" id="IPR036625">
    <property type="entry name" value="E3-bd_dom_sf"/>
</dbReference>
<dbReference type="InterPro" id="IPR004167">
    <property type="entry name" value="PSBD"/>
</dbReference>
<dbReference type="InterPro" id="IPR011053">
    <property type="entry name" value="Single_hybrid_motif"/>
</dbReference>
<dbReference type="InterPro" id="IPR006255">
    <property type="entry name" value="SucB"/>
</dbReference>
<dbReference type="NCBIfam" id="NF004309">
    <property type="entry name" value="PRK05704.1"/>
    <property type="match status" value="1"/>
</dbReference>
<dbReference type="NCBIfam" id="TIGR01347">
    <property type="entry name" value="sucB"/>
    <property type="match status" value="1"/>
</dbReference>
<dbReference type="PANTHER" id="PTHR43416:SF5">
    <property type="entry name" value="DIHYDROLIPOYLLYSINE-RESIDUE SUCCINYLTRANSFERASE COMPONENT OF 2-OXOGLUTARATE DEHYDROGENASE COMPLEX, MITOCHONDRIAL"/>
    <property type="match status" value="1"/>
</dbReference>
<dbReference type="PANTHER" id="PTHR43416">
    <property type="entry name" value="DIHYDROLIPOYLLYSINE-RESIDUE SUCCINYLTRANSFERASE COMPONENT OF 2-OXOGLUTARATE DEHYDROGENASE COMPLEX, MITOCHONDRIAL-RELATED"/>
    <property type="match status" value="1"/>
</dbReference>
<dbReference type="Pfam" id="PF00198">
    <property type="entry name" value="2-oxoacid_dh"/>
    <property type="match status" value="1"/>
</dbReference>
<dbReference type="Pfam" id="PF00364">
    <property type="entry name" value="Biotin_lipoyl"/>
    <property type="match status" value="1"/>
</dbReference>
<dbReference type="Pfam" id="PF02817">
    <property type="entry name" value="E3_binding"/>
    <property type="match status" value="1"/>
</dbReference>
<dbReference type="SUPFAM" id="SSF52777">
    <property type="entry name" value="CoA-dependent acyltransferases"/>
    <property type="match status" value="1"/>
</dbReference>
<dbReference type="SUPFAM" id="SSF47005">
    <property type="entry name" value="Peripheral subunit-binding domain of 2-oxo acid dehydrogenase complex"/>
    <property type="match status" value="1"/>
</dbReference>
<dbReference type="SUPFAM" id="SSF51230">
    <property type="entry name" value="Single hybrid motif"/>
    <property type="match status" value="1"/>
</dbReference>
<dbReference type="PROSITE" id="PS50968">
    <property type="entry name" value="BIOTINYL_LIPOYL"/>
    <property type="match status" value="1"/>
</dbReference>
<dbReference type="PROSITE" id="PS00189">
    <property type="entry name" value="LIPOYL"/>
    <property type="match status" value="1"/>
</dbReference>
<dbReference type="PROSITE" id="PS51826">
    <property type="entry name" value="PSBD"/>
    <property type="match status" value="1"/>
</dbReference>
<sequence length="409" mass="45163">MAIEILVPDLPESVADATVATWHKKLGDTVKRDEVIVEIETDKVVLEVPALSDGVLAEVVQAEGETVVSKQLLGKISTAQEGDVSSATLKATNEPTPSDRQNAAIENSHNHNADQSPVIRRLLAEHDLQADQIQGSGVGGRLTREDIEREIAKRQAQQVKQEAATEQNTISTVAYSARSEKRVPMTRLRKRIAERLLEAKNSTAMLTTFNEVDMQPIMTLRKTYGEKFEKQHSVRLGFMSFYIKAVVEALKRYPEVNASIDGDDVVYHNYFDISIAVSTPRGLVTPVLRDCDKLSMAEIEKQIKALAEKGRDGKLTVEDLTGGNFTITNGGVFGSLMSTPIINPPQSAILGMHAIKERPIALNGQVVIRPMMYLALSYDHRLIDGRESVGFLVTIKELLEDPTRLLLEI</sequence>
<reference key="1">
    <citation type="journal article" date="1995" name="Science">
        <title>Whole-genome random sequencing and assembly of Haemophilus influenzae Rd.</title>
        <authorList>
            <person name="Fleischmann R.D."/>
            <person name="Adams M.D."/>
            <person name="White O."/>
            <person name="Clayton R.A."/>
            <person name="Kirkness E.F."/>
            <person name="Kerlavage A.R."/>
            <person name="Bult C.J."/>
            <person name="Tomb J.-F."/>
            <person name="Dougherty B.A."/>
            <person name="Merrick J.M."/>
            <person name="McKenney K."/>
            <person name="Sutton G.G."/>
            <person name="FitzHugh W."/>
            <person name="Fields C.A."/>
            <person name="Gocayne J.D."/>
            <person name="Scott J.D."/>
            <person name="Shirley R."/>
            <person name="Liu L.-I."/>
            <person name="Glodek A."/>
            <person name="Kelley J.M."/>
            <person name="Weidman J.F."/>
            <person name="Phillips C.A."/>
            <person name="Spriggs T."/>
            <person name="Hedblom E."/>
            <person name="Cotton M.D."/>
            <person name="Utterback T.R."/>
            <person name="Hanna M.C."/>
            <person name="Nguyen D.T."/>
            <person name="Saudek D.M."/>
            <person name="Brandon R.C."/>
            <person name="Fine L.D."/>
            <person name="Fritchman J.L."/>
            <person name="Fuhrmann J.L."/>
            <person name="Geoghagen N.S.M."/>
            <person name="Gnehm C.L."/>
            <person name="McDonald L.A."/>
            <person name="Small K.V."/>
            <person name="Fraser C.M."/>
            <person name="Smith H.O."/>
            <person name="Venter J.C."/>
        </authorList>
    </citation>
    <scope>NUCLEOTIDE SEQUENCE [LARGE SCALE GENOMIC DNA]</scope>
    <source>
        <strain>ATCC 51907 / DSM 11121 / KW20 / Rd</strain>
    </source>
</reference>
<organism>
    <name type="scientific">Haemophilus influenzae (strain ATCC 51907 / DSM 11121 / KW20 / Rd)</name>
    <dbReference type="NCBI Taxonomy" id="71421"/>
    <lineage>
        <taxon>Bacteria</taxon>
        <taxon>Pseudomonadati</taxon>
        <taxon>Pseudomonadota</taxon>
        <taxon>Gammaproteobacteria</taxon>
        <taxon>Pasteurellales</taxon>
        <taxon>Pasteurellaceae</taxon>
        <taxon>Haemophilus</taxon>
    </lineage>
</organism>
<feature type="chain" id="PRO_0000162264" description="Dihydrolipoyllysine-residue succinyltransferase component of 2-oxoglutarate dehydrogenase complex">
    <location>
        <begin position="1"/>
        <end position="409"/>
    </location>
</feature>
<feature type="domain" description="Lipoyl-binding" evidence="3">
    <location>
        <begin position="2"/>
        <end position="77"/>
    </location>
</feature>
<feature type="domain" description="Peripheral subunit-binding (PSBD)" evidence="4">
    <location>
        <begin position="114"/>
        <end position="151"/>
    </location>
</feature>
<feature type="region of interest" description="Disordered" evidence="5">
    <location>
        <begin position="83"/>
        <end position="114"/>
    </location>
</feature>
<feature type="compositionally biased region" description="Polar residues" evidence="5">
    <location>
        <begin position="83"/>
        <end position="107"/>
    </location>
</feature>
<feature type="active site" evidence="2">
    <location>
        <position position="380"/>
    </location>
</feature>
<feature type="active site" evidence="2">
    <location>
        <position position="384"/>
    </location>
</feature>
<feature type="modified residue" description="N6-lipoyllysine" evidence="3">
    <location>
        <position position="43"/>
    </location>
</feature>